<reference key="1">
    <citation type="journal article" date="2007" name="Theor. Appl. Genet.">
        <title>Complete chloroplast genome sequences of Hordeum vulgare, Sorghum bicolor and Agrostis stolonifera, and comparative analyses with other grass genomes.</title>
        <authorList>
            <person name="Saski C."/>
            <person name="Lee S.-B."/>
            <person name="Fjellheim S."/>
            <person name="Guda C."/>
            <person name="Jansen R.K."/>
            <person name="Luo H."/>
            <person name="Tomkins J."/>
            <person name="Rognli O.A."/>
            <person name="Daniell H."/>
            <person name="Clarke J.L."/>
        </authorList>
    </citation>
    <scope>NUCLEOTIDE SEQUENCE [LARGE SCALE GENOMIC DNA]</scope>
    <source>
        <strain>cv. Penn A-4</strain>
    </source>
</reference>
<organism>
    <name type="scientific">Agrostis stolonifera</name>
    <name type="common">Creeping bentgrass</name>
    <dbReference type="NCBI Taxonomy" id="63632"/>
    <lineage>
        <taxon>Eukaryota</taxon>
        <taxon>Viridiplantae</taxon>
        <taxon>Streptophyta</taxon>
        <taxon>Embryophyta</taxon>
        <taxon>Tracheophyta</taxon>
        <taxon>Spermatophyta</taxon>
        <taxon>Magnoliopsida</taxon>
        <taxon>Liliopsida</taxon>
        <taxon>Poales</taxon>
        <taxon>Poaceae</taxon>
        <taxon>BOP clade</taxon>
        <taxon>Pooideae</taxon>
        <taxon>Poodae</taxon>
        <taxon>Poeae</taxon>
        <taxon>Poeae Chloroplast Group 1 (Aveneae type)</taxon>
        <taxon>Agrostidodinae</taxon>
        <taxon>Agrostidinae</taxon>
        <taxon>Agrostis</taxon>
    </lineage>
</organism>
<sequence length="119" mass="14320">MTRVPRGYIARRRRTKMRSFASNFRGAHLRLNRMITQQVKRAFVSSHRDRGRQKRDFRRLWITRINAATRIYKVFDSYSKLIHNLYKKKLILNRKMLAQVAVSNPNNLYTISNKIKIIN</sequence>
<comment type="function">
    <text evidence="1">Binds directly to 23S ribosomal RNA and is necessary for the in vitro assembly process of the 50S ribosomal subunit. It is not involved in the protein synthesizing functions of that subunit.</text>
</comment>
<comment type="subcellular location">
    <subcellularLocation>
        <location>Plastid</location>
        <location>Chloroplast</location>
    </subcellularLocation>
</comment>
<comment type="similarity">
    <text evidence="1">Belongs to the bacterial ribosomal protein bL20 family.</text>
</comment>
<gene>
    <name evidence="1" type="primary">rpl20</name>
</gene>
<name>RK20_AGRST</name>
<protein>
    <recommendedName>
        <fullName evidence="1">Large ribosomal subunit protein bL20c</fullName>
    </recommendedName>
    <alternativeName>
        <fullName evidence="2">50S ribosomal protein L20, chloroplastic</fullName>
    </alternativeName>
</protein>
<feature type="chain" id="PRO_0000276401" description="Large ribosomal subunit protein bL20c">
    <location>
        <begin position="1"/>
        <end position="119"/>
    </location>
</feature>
<evidence type="ECO:0000255" key="1">
    <source>
        <dbReference type="HAMAP-Rule" id="MF_00382"/>
    </source>
</evidence>
<evidence type="ECO:0000305" key="2"/>
<dbReference type="EMBL" id="EF115543">
    <property type="protein sequence ID" value="ABK79603.1"/>
    <property type="molecule type" value="Genomic_DNA"/>
</dbReference>
<dbReference type="RefSeq" id="YP_874759.1">
    <property type="nucleotide sequence ID" value="NC_008591.1"/>
</dbReference>
<dbReference type="SMR" id="A1EA31"/>
<dbReference type="GeneID" id="4525005"/>
<dbReference type="GO" id="GO:0009507">
    <property type="term" value="C:chloroplast"/>
    <property type="evidence" value="ECO:0007669"/>
    <property type="project" value="UniProtKB-SubCell"/>
</dbReference>
<dbReference type="GO" id="GO:1990904">
    <property type="term" value="C:ribonucleoprotein complex"/>
    <property type="evidence" value="ECO:0007669"/>
    <property type="project" value="UniProtKB-KW"/>
</dbReference>
<dbReference type="GO" id="GO:0005840">
    <property type="term" value="C:ribosome"/>
    <property type="evidence" value="ECO:0007669"/>
    <property type="project" value="UniProtKB-KW"/>
</dbReference>
<dbReference type="GO" id="GO:0019843">
    <property type="term" value="F:rRNA binding"/>
    <property type="evidence" value="ECO:0007669"/>
    <property type="project" value="UniProtKB-UniRule"/>
</dbReference>
<dbReference type="GO" id="GO:0003735">
    <property type="term" value="F:structural constituent of ribosome"/>
    <property type="evidence" value="ECO:0007669"/>
    <property type="project" value="InterPro"/>
</dbReference>
<dbReference type="GO" id="GO:0000027">
    <property type="term" value="P:ribosomal large subunit assembly"/>
    <property type="evidence" value="ECO:0007669"/>
    <property type="project" value="UniProtKB-UniRule"/>
</dbReference>
<dbReference type="GO" id="GO:0006412">
    <property type="term" value="P:translation"/>
    <property type="evidence" value="ECO:0007669"/>
    <property type="project" value="InterPro"/>
</dbReference>
<dbReference type="CDD" id="cd07026">
    <property type="entry name" value="Ribosomal_L20"/>
    <property type="match status" value="1"/>
</dbReference>
<dbReference type="FunFam" id="1.10.1900.20:FF:000002">
    <property type="entry name" value="50S ribosomal protein L20, chloroplastic"/>
    <property type="match status" value="1"/>
</dbReference>
<dbReference type="Gene3D" id="6.10.160.10">
    <property type="match status" value="1"/>
</dbReference>
<dbReference type="Gene3D" id="1.10.1900.20">
    <property type="entry name" value="Ribosomal protein L20"/>
    <property type="match status" value="1"/>
</dbReference>
<dbReference type="HAMAP" id="MF_00382">
    <property type="entry name" value="Ribosomal_bL20"/>
    <property type="match status" value="1"/>
</dbReference>
<dbReference type="InterPro" id="IPR005813">
    <property type="entry name" value="Ribosomal_bL20"/>
</dbReference>
<dbReference type="InterPro" id="IPR049946">
    <property type="entry name" value="RIBOSOMAL_L20_CS"/>
</dbReference>
<dbReference type="InterPro" id="IPR035566">
    <property type="entry name" value="Ribosomal_protein_bL20_C"/>
</dbReference>
<dbReference type="NCBIfam" id="TIGR01032">
    <property type="entry name" value="rplT_bact"/>
    <property type="match status" value="1"/>
</dbReference>
<dbReference type="PANTHER" id="PTHR10986">
    <property type="entry name" value="39S RIBOSOMAL PROTEIN L20"/>
    <property type="match status" value="1"/>
</dbReference>
<dbReference type="Pfam" id="PF00453">
    <property type="entry name" value="Ribosomal_L20"/>
    <property type="match status" value="1"/>
</dbReference>
<dbReference type="PRINTS" id="PR00062">
    <property type="entry name" value="RIBOSOMALL20"/>
</dbReference>
<dbReference type="SUPFAM" id="SSF74731">
    <property type="entry name" value="Ribosomal protein L20"/>
    <property type="match status" value="1"/>
</dbReference>
<dbReference type="PROSITE" id="PS00937">
    <property type="entry name" value="RIBOSOMAL_L20"/>
    <property type="match status" value="1"/>
</dbReference>
<geneLocation type="chloroplast"/>
<accession>A1EA31</accession>
<keyword id="KW-0150">Chloroplast</keyword>
<keyword id="KW-0934">Plastid</keyword>
<keyword id="KW-0687">Ribonucleoprotein</keyword>
<keyword id="KW-0689">Ribosomal protein</keyword>
<keyword id="KW-0694">RNA-binding</keyword>
<keyword id="KW-0699">rRNA-binding</keyword>
<proteinExistence type="inferred from homology"/>